<evidence type="ECO:0000250" key="1"/>
<evidence type="ECO:0000255" key="2">
    <source>
        <dbReference type="HAMAP-Rule" id="MF_00138"/>
    </source>
</evidence>
<protein>
    <recommendedName>
        <fullName evidence="2">Phosphoribosylamine--glycine ligase</fullName>
        <ecNumber evidence="2">6.3.4.13</ecNumber>
    </recommendedName>
    <alternativeName>
        <fullName evidence="2">GARS</fullName>
    </alternativeName>
    <alternativeName>
        <fullName evidence="2">Glycinamide ribonucleotide synthetase</fullName>
    </alternativeName>
    <alternativeName>
        <fullName evidence="2">Phosphoribosylglycinamide synthetase</fullName>
    </alternativeName>
</protein>
<reference key="1">
    <citation type="journal article" date="2003" name="Proc. Natl. Acad. Sci. U.S.A.">
        <title>The complete genome sequence of Mycobacterium bovis.</title>
        <authorList>
            <person name="Garnier T."/>
            <person name="Eiglmeier K."/>
            <person name="Camus J.-C."/>
            <person name="Medina N."/>
            <person name="Mansoor H."/>
            <person name="Pryor M."/>
            <person name="Duthoy S."/>
            <person name="Grondin S."/>
            <person name="Lacroix C."/>
            <person name="Monsempe C."/>
            <person name="Simon S."/>
            <person name="Harris B."/>
            <person name="Atkin R."/>
            <person name="Doggett J."/>
            <person name="Mayes R."/>
            <person name="Keating L."/>
            <person name="Wheeler P.R."/>
            <person name="Parkhill J."/>
            <person name="Barrell B.G."/>
            <person name="Cole S.T."/>
            <person name="Gordon S.V."/>
            <person name="Hewinson R.G."/>
        </authorList>
    </citation>
    <scope>NUCLEOTIDE SEQUENCE [LARGE SCALE GENOMIC DNA]</scope>
    <source>
        <strain>ATCC BAA-935 / AF2122/97</strain>
    </source>
</reference>
<reference key="2">
    <citation type="journal article" date="2017" name="Genome Announc.">
        <title>Updated reference genome sequence and annotation of Mycobacterium bovis AF2122/97.</title>
        <authorList>
            <person name="Malone K.M."/>
            <person name="Farrell D."/>
            <person name="Stuber T.P."/>
            <person name="Schubert O.T."/>
            <person name="Aebersold R."/>
            <person name="Robbe-Austerman S."/>
            <person name="Gordon S.V."/>
        </authorList>
    </citation>
    <scope>NUCLEOTIDE SEQUENCE [LARGE SCALE GENOMIC DNA]</scope>
    <scope>GENOME REANNOTATION</scope>
    <source>
        <strain>ATCC BAA-935 / AF2122/97</strain>
    </source>
</reference>
<feature type="chain" id="PRO_0000151465" description="Phosphoribosylamine--glycine ligase">
    <location>
        <begin position="1"/>
        <end position="422"/>
    </location>
</feature>
<feature type="domain" description="ATP-grasp" evidence="2">
    <location>
        <begin position="107"/>
        <end position="312"/>
    </location>
</feature>
<feature type="binding site" evidence="2">
    <location>
        <begin position="137"/>
        <end position="193"/>
    </location>
    <ligand>
        <name>ATP</name>
        <dbReference type="ChEBI" id="CHEBI:30616"/>
    </ligand>
</feature>
<feature type="binding site" evidence="2">
    <location>
        <position position="282"/>
    </location>
    <ligand>
        <name>Mg(2+)</name>
        <dbReference type="ChEBI" id="CHEBI:18420"/>
    </ligand>
</feature>
<feature type="binding site" evidence="2">
    <location>
        <position position="284"/>
    </location>
    <ligand>
        <name>Mg(2+)</name>
        <dbReference type="ChEBI" id="CHEBI:18420"/>
    </ligand>
</feature>
<accession>P65894</accession>
<accession>A0A1R3XWF7</accession>
<accession>P71827</accession>
<accession>X2BG60</accession>
<comment type="catalytic activity">
    <reaction evidence="2">
        <text>5-phospho-beta-D-ribosylamine + glycine + ATP = N(1)-(5-phospho-beta-D-ribosyl)glycinamide + ADP + phosphate + H(+)</text>
        <dbReference type="Rhea" id="RHEA:17453"/>
        <dbReference type="ChEBI" id="CHEBI:15378"/>
        <dbReference type="ChEBI" id="CHEBI:30616"/>
        <dbReference type="ChEBI" id="CHEBI:43474"/>
        <dbReference type="ChEBI" id="CHEBI:57305"/>
        <dbReference type="ChEBI" id="CHEBI:58681"/>
        <dbReference type="ChEBI" id="CHEBI:143788"/>
        <dbReference type="ChEBI" id="CHEBI:456216"/>
        <dbReference type="EC" id="6.3.4.13"/>
    </reaction>
</comment>
<comment type="cofactor">
    <cofactor evidence="1">
        <name>Mg(2+)</name>
        <dbReference type="ChEBI" id="CHEBI:18420"/>
    </cofactor>
    <cofactor evidence="1">
        <name>Mn(2+)</name>
        <dbReference type="ChEBI" id="CHEBI:29035"/>
    </cofactor>
    <text evidence="1">Binds 1 Mg(2+) or Mn(2+) ion per subunit.</text>
</comment>
<comment type="pathway">
    <text evidence="2">Purine metabolism; IMP biosynthesis via de novo pathway; N(1)-(5-phospho-D-ribosyl)glycinamide from 5-phospho-alpha-D-ribose 1-diphosphate: step 2/2.</text>
</comment>
<comment type="similarity">
    <text evidence="2">Belongs to the GARS family.</text>
</comment>
<organism>
    <name type="scientific">Mycobacterium bovis (strain ATCC BAA-935 / AF2122/97)</name>
    <dbReference type="NCBI Taxonomy" id="233413"/>
    <lineage>
        <taxon>Bacteria</taxon>
        <taxon>Bacillati</taxon>
        <taxon>Actinomycetota</taxon>
        <taxon>Actinomycetes</taxon>
        <taxon>Mycobacteriales</taxon>
        <taxon>Mycobacteriaceae</taxon>
        <taxon>Mycobacterium</taxon>
        <taxon>Mycobacterium tuberculosis complex</taxon>
    </lineage>
</organism>
<proteinExistence type="inferred from homology"/>
<name>PUR2_MYCBO</name>
<keyword id="KW-0067">ATP-binding</keyword>
<keyword id="KW-0436">Ligase</keyword>
<keyword id="KW-0460">Magnesium</keyword>
<keyword id="KW-0464">Manganese</keyword>
<keyword id="KW-0479">Metal-binding</keyword>
<keyword id="KW-0547">Nucleotide-binding</keyword>
<keyword id="KW-0658">Purine biosynthesis</keyword>
<keyword id="KW-1185">Reference proteome</keyword>
<gene>
    <name evidence="2" type="primary">purD</name>
    <name type="ordered locus">BQ2027_MB0795</name>
</gene>
<sequence length="422" mass="43509">MRVLVIGSGAREHALLLALGKDPQVSGLIVAPGNAGTARIAEQHDVDITSAEAVVALAREVGADMVVIGPEVPLVLGVADAVRAAGIVCFGPGKDAARIEGSKAFAKDVMAAAGVRTANSEIVDSPAHLDAALDRFGPPAGDPAWVVKDDRLAAGKGVVVTADRDVARAHGAALLEAGHPVLLESYLDGPEVSLFCVVDRTVVVPLLPAQDFKRVGEDDTGLNTGGMGAYAPLPWLPDNIYREVVSRIVEPVAAELVRRGSSFCGLLYVGLAITARGPAVVEFNCRFGDPETQAVLALLESPLGQLLHAAATGKLADFGELRWRDGVAVTVVLAAENYPGRPRVGDVVVGSEAEGVLHAGTTRRDDGAIVSSGGRVLSVVGTGADLSAARAHAYEILSSIRLPGGHFRSDIGLRAAEGKISV</sequence>
<dbReference type="EC" id="6.3.4.13" evidence="2"/>
<dbReference type="EMBL" id="LT708304">
    <property type="protein sequence ID" value="SIT99394.1"/>
    <property type="molecule type" value="Genomic_DNA"/>
</dbReference>
<dbReference type="RefSeq" id="NP_854453.1">
    <property type="nucleotide sequence ID" value="NC_002945.3"/>
</dbReference>
<dbReference type="RefSeq" id="WP_003898580.1">
    <property type="nucleotide sequence ID" value="NC_002945.4"/>
</dbReference>
<dbReference type="SMR" id="P65894"/>
<dbReference type="KEGG" id="mbo:BQ2027_MB0795"/>
<dbReference type="PATRIC" id="fig|233413.5.peg.865"/>
<dbReference type="UniPathway" id="UPA00074">
    <property type="reaction ID" value="UER00125"/>
</dbReference>
<dbReference type="Proteomes" id="UP000001419">
    <property type="component" value="Chromosome"/>
</dbReference>
<dbReference type="GO" id="GO:0005524">
    <property type="term" value="F:ATP binding"/>
    <property type="evidence" value="ECO:0007669"/>
    <property type="project" value="UniProtKB-KW"/>
</dbReference>
<dbReference type="GO" id="GO:0046872">
    <property type="term" value="F:metal ion binding"/>
    <property type="evidence" value="ECO:0007669"/>
    <property type="project" value="UniProtKB-KW"/>
</dbReference>
<dbReference type="GO" id="GO:0004637">
    <property type="term" value="F:phosphoribosylamine-glycine ligase activity"/>
    <property type="evidence" value="ECO:0007669"/>
    <property type="project" value="UniProtKB-UniRule"/>
</dbReference>
<dbReference type="GO" id="GO:0006189">
    <property type="term" value="P:'de novo' IMP biosynthetic process"/>
    <property type="evidence" value="ECO:0007669"/>
    <property type="project" value="UniProtKB-UniRule"/>
</dbReference>
<dbReference type="GO" id="GO:0009113">
    <property type="term" value="P:purine nucleobase biosynthetic process"/>
    <property type="evidence" value="ECO:0007669"/>
    <property type="project" value="InterPro"/>
</dbReference>
<dbReference type="Gene3D" id="3.40.50.20">
    <property type="match status" value="1"/>
</dbReference>
<dbReference type="Gene3D" id="3.30.1490.20">
    <property type="entry name" value="ATP-grasp fold, A domain"/>
    <property type="match status" value="1"/>
</dbReference>
<dbReference type="Gene3D" id="3.30.470.20">
    <property type="entry name" value="ATP-grasp fold, B domain"/>
    <property type="match status" value="1"/>
</dbReference>
<dbReference type="Gene3D" id="3.90.600.10">
    <property type="entry name" value="Phosphoribosylglycinamide synthetase, C-terminal domain"/>
    <property type="match status" value="1"/>
</dbReference>
<dbReference type="HAMAP" id="MF_00138">
    <property type="entry name" value="GARS"/>
    <property type="match status" value="1"/>
</dbReference>
<dbReference type="InterPro" id="IPR011761">
    <property type="entry name" value="ATP-grasp"/>
</dbReference>
<dbReference type="InterPro" id="IPR013815">
    <property type="entry name" value="ATP_grasp_subdomain_1"/>
</dbReference>
<dbReference type="InterPro" id="IPR016185">
    <property type="entry name" value="PreATP-grasp_dom_sf"/>
</dbReference>
<dbReference type="InterPro" id="IPR020561">
    <property type="entry name" value="PRibGlycinamid_synth_ATP-grasp"/>
</dbReference>
<dbReference type="InterPro" id="IPR000115">
    <property type="entry name" value="PRibGlycinamide_synth"/>
</dbReference>
<dbReference type="InterPro" id="IPR020560">
    <property type="entry name" value="PRibGlycinamide_synth_C-dom"/>
</dbReference>
<dbReference type="InterPro" id="IPR037123">
    <property type="entry name" value="PRibGlycinamide_synth_C_sf"/>
</dbReference>
<dbReference type="InterPro" id="IPR020559">
    <property type="entry name" value="PRibGlycinamide_synth_CS"/>
</dbReference>
<dbReference type="InterPro" id="IPR020562">
    <property type="entry name" value="PRibGlycinamide_synth_N"/>
</dbReference>
<dbReference type="InterPro" id="IPR011054">
    <property type="entry name" value="Rudment_hybrid_motif"/>
</dbReference>
<dbReference type="NCBIfam" id="TIGR00877">
    <property type="entry name" value="purD"/>
    <property type="match status" value="1"/>
</dbReference>
<dbReference type="PANTHER" id="PTHR43472">
    <property type="entry name" value="PHOSPHORIBOSYLAMINE--GLYCINE LIGASE"/>
    <property type="match status" value="1"/>
</dbReference>
<dbReference type="PANTHER" id="PTHR43472:SF1">
    <property type="entry name" value="PHOSPHORIBOSYLAMINE--GLYCINE LIGASE, CHLOROPLASTIC"/>
    <property type="match status" value="1"/>
</dbReference>
<dbReference type="Pfam" id="PF01071">
    <property type="entry name" value="GARS_A"/>
    <property type="match status" value="1"/>
</dbReference>
<dbReference type="Pfam" id="PF02843">
    <property type="entry name" value="GARS_C"/>
    <property type="match status" value="1"/>
</dbReference>
<dbReference type="Pfam" id="PF02844">
    <property type="entry name" value="GARS_N"/>
    <property type="match status" value="1"/>
</dbReference>
<dbReference type="SMART" id="SM01209">
    <property type="entry name" value="GARS_A"/>
    <property type="match status" value="1"/>
</dbReference>
<dbReference type="SMART" id="SM01210">
    <property type="entry name" value="GARS_C"/>
    <property type="match status" value="1"/>
</dbReference>
<dbReference type="SUPFAM" id="SSF56059">
    <property type="entry name" value="Glutathione synthetase ATP-binding domain-like"/>
    <property type="match status" value="1"/>
</dbReference>
<dbReference type="SUPFAM" id="SSF52440">
    <property type="entry name" value="PreATP-grasp domain"/>
    <property type="match status" value="1"/>
</dbReference>
<dbReference type="SUPFAM" id="SSF51246">
    <property type="entry name" value="Rudiment single hybrid motif"/>
    <property type="match status" value="1"/>
</dbReference>
<dbReference type="PROSITE" id="PS50975">
    <property type="entry name" value="ATP_GRASP"/>
    <property type="match status" value="1"/>
</dbReference>
<dbReference type="PROSITE" id="PS00184">
    <property type="entry name" value="GARS"/>
    <property type="match status" value="1"/>
</dbReference>